<comment type="subcellular location">
    <subcellularLocation>
        <location evidence="2">Cytoplasm</location>
    </subcellularLocation>
    <subcellularLocation>
        <location evidence="2">Nucleus</location>
    </subcellularLocation>
</comment>
<protein>
    <recommendedName>
        <fullName>Ankyrin repeat-containing protein C105.02c</fullName>
    </recommendedName>
</protein>
<sequence>MSTEGAKPSEMLIAACRSNNVDMLEEVVHQQEGDGVSFINNARDSLGNDCVHVCTKYGSLECLDWLLDISGVNLNNRCRMTGDTPLHFAVMFIKKDQETALRMVEMLMEVGADPLLTNNDGFRPIDLVPGDFHDVFASALEGPAPALQYSADVVADDDDEEEGSGESDEE</sequence>
<feature type="chain" id="PRO_0000310321" description="Ankyrin repeat-containing protein C105.02c">
    <location>
        <begin position="1"/>
        <end position="170"/>
    </location>
</feature>
<feature type="repeat" description="ANK 1">
    <location>
        <begin position="46"/>
        <end position="76"/>
    </location>
</feature>
<feature type="repeat" description="ANK 2">
    <location>
        <begin position="81"/>
        <end position="116"/>
    </location>
</feature>
<feature type="region of interest" description="Disordered" evidence="1">
    <location>
        <begin position="150"/>
        <end position="170"/>
    </location>
</feature>
<feature type="compositionally biased region" description="Acidic residues" evidence="1">
    <location>
        <begin position="154"/>
        <end position="170"/>
    </location>
</feature>
<keyword id="KW-0040">ANK repeat</keyword>
<keyword id="KW-0963">Cytoplasm</keyword>
<keyword id="KW-0539">Nucleus</keyword>
<keyword id="KW-1185">Reference proteome</keyword>
<keyword id="KW-0677">Repeat</keyword>
<evidence type="ECO:0000256" key="1">
    <source>
        <dbReference type="SAM" id="MobiDB-lite"/>
    </source>
</evidence>
<evidence type="ECO:0000269" key="2">
    <source>
    </source>
</evidence>
<organism>
    <name type="scientific">Schizosaccharomyces pombe (strain 972 / ATCC 24843)</name>
    <name type="common">Fission yeast</name>
    <dbReference type="NCBI Taxonomy" id="284812"/>
    <lineage>
        <taxon>Eukaryota</taxon>
        <taxon>Fungi</taxon>
        <taxon>Dikarya</taxon>
        <taxon>Ascomycota</taxon>
        <taxon>Taphrinomycotina</taxon>
        <taxon>Schizosaccharomycetes</taxon>
        <taxon>Schizosaccharomycetales</taxon>
        <taxon>Schizosaccharomycetaceae</taxon>
        <taxon>Schizosaccharomyces</taxon>
    </lineage>
</organism>
<proteinExistence type="predicted"/>
<gene>
    <name type="ORF">SPAC105.02c</name>
</gene>
<accession>Q9P7I0</accession>
<reference key="1">
    <citation type="journal article" date="2002" name="Nature">
        <title>The genome sequence of Schizosaccharomyces pombe.</title>
        <authorList>
            <person name="Wood V."/>
            <person name="Gwilliam R."/>
            <person name="Rajandream M.A."/>
            <person name="Lyne M.H."/>
            <person name="Lyne R."/>
            <person name="Stewart A."/>
            <person name="Sgouros J.G."/>
            <person name="Peat N."/>
            <person name="Hayles J."/>
            <person name="Baker S.G."/>
            <person name="Basham D."/>
            <person name="Bowman S."/>
            <person name="Brooks K."/>
            <person name="Brown D."/>
            <person name="Brown S."/>
            <person name="Chillingworth T."/>
            <person name="Churcher C.M."/>
            <person name="Collins M."/>
            <person name="Connor R."/>
            <person name="Cronin A."/>
            <person name="Davis P."/>
            <person name="Feltwell T."/>
            <person name="Fraser A."/>
            <person name="Gentles S."/>
            <person name="Goble A."/>
            <person name="Hamlin N."/>
            <person name="Harris D.E."/>
            <person name="Hidalgo J."/>
            <person name="Hodgson G."/>
            <person name="Holroyd S."/>
            <person name="Hornsby T."/>
            <person name="Howarth S."/>
            <person name="Huckle E.J."/>
            <person name="Hunt S."/>
            <person name="Jagels K."/>
            <person name="James K.D."/>
            <person name="Jones L."/>
            <person name="Jones M."/>
            <person name="Leather S."/>
            <person name="McDonald S."/>
            <person name="McLean J."/>
            <person name="Mooney P."/>
            <person name="Moule S."/>
            <person name="Mungall K.L."/>
            <person name="Murphy L.D."/>
            <person name="Niblett D."/>
            <person name="Odell C."/>
            <person name="Oliver K."/>
            <person name="O'Neil S."/>
            <person name="Pearson D."/>
            <person name="Quail M.A."/>
            <person name="Rabbinowitsch E."/>
            <person name="Rutherford K.M."/>
            <person name="Rutter S."/>
            <person name="Saunders D."/>
            <person name="Seeger K."/>
            <person name="Sharp S."/>
            <person name="Skelton J."/>
            <person name="Simmonds M.N."/>
            <person name="Squares R."/>
            <person name="Squares S."/>
            <person name="Stevens K."/>
            <person name="Taylor K."/>
            <person name="Taylor R.G."/>
            <person name="Tivey A."/>
            <person name="Walsh S.V."/>
            <person name="Warren T."/>
            <person name="Whitehead S."/>
            <person name="Woodward J.R."/>
            <person name="Volckaert G."/>
            <person name="Aert R."/>
            <person name="Robben J."/>
            <person name="Grymonprez B."/>
            <person name="Weltjens I."/>
            <person name="Vanstreels E."/>
            <person name="Rieger M."/>
            <person name="Schaefer M."/>
            <person name="Mueller-Auer S."/>
            <person name="Gabel C."/>
            <person name="Fuchs M."/>
            <person name="Duesterhoeft A."/>
            <person name="Fritzc C."/>
            <person name="Holzer E."/>
            <person name="Moestl D."/>
            <person name="Hilbert H."/>
            <person name="Borzym K."/>
            <person name="Langer I."/>
            <person name="Beck A."/>
            <person name="Lehrach H."/>
            <person name="Reinhardt R."/>
            <person name="Pohl T.M."/>
            <person name="Eger P."/>
            <person name="Zimmermann W."/>
            <person name="Wedler H."/>
            <person name="Wambutt R."/>
            <person name="Purnelle B."/>
            <person name="Goffeau A."/>
            <person name="Cadieu E."/>
            <person name="Dreano S."/>
            <person name="Gloux S."/>
            <person name="Lelaure V."/>
            <person name="Mottier S."/>
            <person name="Galibert F."/>
            <person name="Aves S.J."/>
            <person name="Xiang Z."/>
            <person name="Hunt C."/>
            <person name="Moore K."/>
            <person name="Hurst S.M."/>
            <person name="Lucas M."/>
            <person name="Rochet M."/>
            <person name="Gaillardin C."/>
            <person name="Tallada V.A."/>
            <person name="Garzon A."/>
            <person name="Thode G."/>
            <person name="Daga R.R."/>
            <person name="Cruzado L."/>
            <person name="Jimenez J."/>
            <person name="Sanchez M."/>
            <person name="del Rey F."/>
            <person name="Benito J."/>
            <person name="Dominguez A."/>
            <person name="Revuelta J.L."/>
            <person name="Moreno S."/>
            <person name="Armstrong J."/>
            <person name="Forsburg S.L."/>
            <person name="Cerutti L."/>
            <person name="Lowe T."/>
            <person name="McCombie W.R."/>
            <person name="Paulsen I."/>
            <person name="Potashkin J."/>
            <person name="Shpakovski G.V."/>
            <person name="Ussery D."/>
            <person name="Barrell B.G."/>
            <person name="Nurse P."/>
        </authorList>
    </citation>
    <scope>NUCLEOTIDE SEQUENCE [LARGE SCALE GENOMIC DNA]</scope>
    <source>
        <strain>972 / ATCC 24843</strain>
    </source>
</reference>
<reference key="2">
    <citation type="journal article" date="2006" name="Nat. Biotechnol.">
        <title>ORFeome cloning and global analysis of protein localization in the fission yeast Schizosaccharomyces pombe.</title>
        <authorList>
            <person name="Matsuyama A."/>
            <person name="Arai R."/>
            <person name="Yashiroda Y."/>
            <person name="Shirai A."/>
            <person name="Kamata A."/>
            <person name="Sekido S."/>
            <person name="Kobayashi Y."/>
            <person name="Hashimoto A."/>
            <person name="Hamamoto M."/>
            <person name="Hiraoka Y."/>
            <person name="Horinouchi S."/>
            <person name="Yoshida M."/>
        </authorList>
    </citation>
    <scope>SUBCELLULAR LOCATION [LARGE SCALE ANALYSIS]</scope>
</reference>
<dbReference type="EMBL" id="CU329670">
    <property type="protein sequence ID" value="CAB76235.1"/>
    <property type="molecule type" value="Genomic_DNA"/>
</dbReference>
<dbReference type="PIR" id="T50063">
    <property type="entry name" value="T50063"/>
</dbReference>
<dbReference type="SMR" id="Q9P7I0"/>
<dbReference type="BioGRID" id="279410">
    <property type="interactions" value="38"/>
</dbReference>
<dbReference type="FunCoup" id="Q9P7I0">
    <property type="interactions" value="19"/>
</dbReference>
<dbReference type="STRING" id="284812.Q9P7I0"/>
<dbReference type="iPTMnet" id="Q9P7I0"/>
<dbReference type="PaxDb" id="4896-SPAC105.02c.1"/>
<dbReference type="EnsemblFungi" id="SPAC105.02c.1">
    <property type="protein sequence ID" value="SPAC105.02c.1:pep"/>
    <property type="gene ID" value="SPAC105.02c"/>
</dbReference>
<dbReference type="KEGG" id="spo:2542971"/>
<dbReference type="PomBase" id="SPAC105.02c"/>
<dbReference type="VEuPathDB" id="FungiDB:SPAC105.02c"/>
<dbReference type="eggNOG" id="ENOG502S4CU">
    <property type="taxonomic scope" value="Eukaryota"/>
</dbReference>
<dbReference type="HOGENOM" id="CLU_097653_0_0_1"/>
<dbReference type="InParanoid" id="Q9P7I0"/>
<dbReference type="OMA" id="HICAMYG"/>
<dbReference type="PhylomeDB" id="Q9P7I0"/>
<dbReference type="PRO" id="PR:Q9P7I0"/>
<dbReference type="Proteomes" id="UP000002485">
    <property type="component" value="Chromosome I"/>
</dbReference>
<dbReference type="GO" id="GO:0005737">
    <property type="term" value="C:cytoplasm"/>
    <property type="evidence" value="ECO:0000314"/>
    <property type="project" value="PomBase"/>
</dbReference>
<dbReference type="GO" id="GO:0005829">
    <property type="term" value="C:cytosol"/>
    <property type="evidence" value="ECO:0007005"/>
    <property type="project" value="PomBase"/>
</dbReference>
<dbReference type="GO" id="GO:0005634">
    <property type="term" value="C:nucleus"/>
    <property type="evidence" value="ECO:0007005"/>
    <property type="project" value="PomBase"/>
</dbReference>
<dbReference type="GO" id="GO:0017024">
    <property type="term" value="F:myosin I binding"/>
    <property type="evidence" value="ECO:0000353"/>
    <property type="project" value="PomBase"/>
</dbReference>
<dbReference type="GO" id="GO:0140311">
    <property type="term" value="F:protein sequestering activity"/>
    <property type="evidence" value="ECO:0000269"/>
    <property type="project" value="PomBase"/>
</dbReference>
<dbReference type="GO" id="GO:0006897">
    <property type="term" value="P:endocytosis"/>
    <property type="evidence" value="ECO:0000269"/>
    <property type="project" value="PomBase"/>
</dbReference>
<dbReference type="Gene3D" id="1.25.40.20">
    <property type="entry name" value="Ankyrin repeat-containing domain"/>
    <property type="match status" value="1"/>
</dbReference>
<dbReference type="InterPro" id="IPR051637">
    <property type="entry name" value="Ank_repeat_dom-contain_49"/>
</dbReference>
<dbReference type="InterPro" id="IPR002110">
    <property type="entry name" value="Ankyrin_rpt"/>
</dbReference>
<dbReference type="InterPro" id="IPR036770">
    <property type="entry name" value="Ankyrin_rpt-contain_sf"/>
</dbReference>
<dbReference type="PANTHER" id="PTHR24180:SF53">
    <property type="entry name" value="ANKYRIN REPEAT-CONTAINING PROTEIN C105.02C"/>
    <property type="match status" value="1"/>
</dbReference>
<dbReference type="PANTHER" id="PTHR24180">
    <property type="entry name" value="CYCLIN-DEPENDENT KINASE INHIBITOR 2C-RELATED"/>
    <property type="match status" value="1"/>
</dbReference>
<dbReference type="Pfam" id="PF12796">
    <property type="entry name" value="Ank_2"/>
    <property type="match status" value="1"/>
</dbReference>
<dbReference type="SMART" id="SM00248">
    <property type="entry name" value="ANK"/>
    <property type="match status" value="2"/>
</dbReference>
<dbReference type="SUPFAM" id="SSF48403">
    <property type="entry name" value="Ankyrin repeat"/>
    <property type="match status" value="1"/>
</dbReference>
<dbReference type="PROSITE" id="PS50297">
    <property type="entry name" value="ANK_REP_REGION"/>
    <property type="match status" value="1"/>
</dbReference>
<dbReference type="PROSITE" id="PS50088">
    <property type="entry name" value="ANK_REPEAT"/>
    <property type="match status" value="1"/>
</dbReference>
<name>YIT2_SCHPO</name>